<comment type="function">
    <text evidence="1">Together with the chaperonin GroEL, plays an essential role in assisting protein folding. The GroEL-GroES system forms a nano-cage that allows encapsulation of the non-native substrate proteins and provides a physical environment optimized to promote and accelerate protein folding. GroES binds to the apical surface of the GroEL ring, thereby capping the opening of the GroEL channel.</text>
</comment>
<comment type="subunit">
    <text evidence="1">Heptamer of 7 subunits arranged in a ring. Interacts with the chaperonin GroEL.</text>
</comment>
<comment type="subcellular location">
    <subcellularLocation>
        <location evidence="1">Cytoplasm</location>
    </subcellularLocation>
</comment>
<comment type="similarity">
    <text evidence="1 2">Belongs to the GroES chaperonin family.</text>
</comment>
<proteinExistence type="inferred from homology"/>
<dbReference type="EMBL" id="BA000012">
    <property type="protein sequence ID" value="BAB53807.1"/>
    <property type="molecule type" value="Genomic_DNA"/>
</dbReference>
<dbReference type="SMR" id="Q983S3"/>
<dbReference type="KEGG" id="mlo:mll8202"/>
<dbReference type="eggNOG" id="COG0234">
    <property type="taxonomic scope" value="Bacteria"/>
</dbReference>
<dbReference type="HOGENOM" id="CLU_132825_2_0_5"/>
<dbReference type="Proteomes" id="UP000000552">
    <property type="component" value="Chromosome"/>
</dbReference>
<dbReference type="GO" id="GO:0005737">
    <property type="term" value="C:cytoplasm"/>
    <property type="evidence" value="ECO:0007669"/>
    <property type="project" value="UniProtKB-SubCell"/>
</dbReference>
<dbReference type="GO" id="GO:0005524">
    <property type="term" value="F:ATP binding"/>
    <property type="evidence" value="ECO:0007669"/>
    <property type="project" value="InterPro"/>
</dbReference>
<dbReference type="GO" id="GO:0046872">
    <property type="term" value="F:metal ion binding"/>
    <property type="evidence" value="ECO:0007669"/>
    <property type="project" value="TreeGrafter"/>
</dbReference>
<dbReference type="GO" id="GO:0044183">
    <property type="term" value="F:protein folding chaperone"/>
    <property type="evidence" value="ECO:0007669"/>
    <property type="project" value="InterPro"/>
</dbReference>
<dbReference type="GO" id="GO:0051087">
    <property type="term" value="F:protein-folding chaperone binding"/>
    <property type="evidence" value="ECO:0007669"/>
    <property type="project" value="TreeGrafter"/>
</dbReference>
<dbReference type="GO" id="GO:0051082">
    <property type="term" value="F:unfolded protein binding"/>
    <property type="evidence" value="ECO:0007669"/>
    <property type="project" value="TreeGrafter"/>
</dbReference>
<dbReference type="GO" id="GO:0051085">
    <property type="term" value="P:chaperone cofactor-dependent protein refolding"/>
    <property type="evidence" value="ECO:0007669"/>
    <property type="project" value="TreeGrafter"/>
</dbReference>
<dbReference type="CDD" id="cd00320">
    <property type="entry name" value="cpn10"/>
    <property type="match status" value="1"/>
</dbReference>
<dbReference type="FunFam" id="2.30.33.40:FF:000001">
    <property type="entry name" value="10 kDa chaperonin"/>
    <property type="match status" value="1"/>
</dbReference>
<dbReference type="Gene3D" id="2.30.33.40">
    <property type="entry name" value="GroES chaperonin"/>
    <property type="match status" value="1"/>
</dbReference>
<dbReference type="HAMAP" id="MF_00580">
    <property type="entry name" value="CH10"/>
    <property type="match status" value="1"/>
</dbReference>
<dbReference type="InterPro" id="IPR020818">
    <property type="entry name" value="Chaperonin_GroES"/>
</dbReference>
<dbReference type="InterPro" id="IPR037124">
    <property type="entry name" value="Chaperonin_GroES_sf"/>
</dbReference>
<dbReference type="InterPro" id="IPR018369">
    <property type="entry name" value="Chaprnonin_Cpn10_CS"/>
</dbReference>
<dbReference type="InterPro" id="IPR011032">
    <property type="entry name" value="GroES-like_sf"/>
</dbReference>
<dbReference type="NCBIfam" id="NF001527">
    <property type="entry name" value="PRK00364.1-2"/>
    <property type="match status" value="1"/>
</dbReference>
<dbReference type="NCBIfam" id="NF001529">
    <property type="entry name" value="PRK00364.1-5"/>
    <property type="match status" value="1"/>
</dbReference>
<dbReference type="NCBIfam" id="NF001531">
    <property type="entry name" value="PRK00364.2-2"/>
    <property type="match status" value="1"/>
</dbReference>
<dbReference type="NCBIfam" id="NF001533">
    <property type="entry name" value="PRK00364.2-4"/>
    <property type="match status" value="1"/>
</dbReference>
<dbReference type="NCBIfam" id="NF001534">
    <property type="entry name" value="PRK00364.2-5"/>
    <property type="match status" value="1"/>
</dbReference>
<dbReference type="PANTHER" id="PTHR10772">
    <property type="entry name" value="10 KDA HEAT SHOCK PROTEIN"/>
    <property type="match status" value="1"/>
</dbReference>
<dbReference type="PANTHER" id="PTHR10772:SF58">
    <property type="entry name" value="CO-CHAPERONIN GROES"/>
    <property type="match status" value="1"/>
</dbReference>
<dbReference type="Pfam" id="PF00166">
    <property type="entry name" value="Cpn10"/>
    <property type="match status" value="1"/>
</dbReference>
<dbReference type="PRINTS" id="PR00297">
    <property type="entry name" value="CHAPERONIN10"/>
</dbReference>
<dbReference type="SMART" id="SM00883">
    <property type="entry name" value="Cpn10"/>
    <property type="match status" value="1"/>
</dbReference>
<dbReference type="SUPFAM" id="SSF50129">
    <property type="entry name" value="GroES-like"/>
    <property type="match status" value="1"/>
</dbReference>
<dbReference type="PROSITE" id="PS00681">
    <property type="entry name" value="CHAPERONINS_CPN10"/>
    <property type="match status" value="1"/>
</dbReference>
<evidence type="ECO:0000255" key="1">
    <source>
        <dbReference type="HAMAP-Rule" id="MF_00580"/>
    </source>
</evidence>
<evidence type="ECO:0000305" key="2"/>
<feature type="chain" id="PRO_0000174815" description="Co-chaperonin GroES 4">
    <location>
        <begin position="1"/>
        <end position="98"/>
    </location>
</feature>
<keyword id="KW-0143">Chaperone</keyword>
<keyword id="KW-0963">Cytoplasm</keyword>
<name>CH104_RHILO</name>
<protein>
    <recommendedName>
        <fullName evidence="1">Co-chaperonin GroES 4</fullName>
    </recommendedName>
    <alternativeName>
        <fullName evidence="1">10 kDa chaperonin 4</fullName>
    </alternativeName>
    <alternativeName>
        <fullName evidence="1">Chaperonin-10 4</fullName>
        <shortName evidence="1">Cpn10 4</shortName>
    </alternativeName>
</protein>
<gene>
    <name evidence="1" type="primary">groES4</name>
    <name evidence="1" type="synonym">groS4</name>
    <name type="ordered locus">mll8202</name>
</gene>
<organism>
    <name type="scientific">Mesorhizobium japonicum (strain LMG 29417 / CECT 9101 / MAFF 303099)</name>
    <name type="common">Mesorhizobium loti (strain MAFF 303099)</name>
    <dbReference type="NCBI Taxonomy" id="266835"/>
    <lineage>
        <taxon>Bacteria</taxon>
        <taxon>Pseudomonadati</taxon>
        <taxon>Pseudomonadota</taxon>
        <taxon>Alphaproteobacteria</taxon>
        <taxon>Hyphomicrobiales</taxon>
        <taxon>Phyllobacteriaceae</taxon>
        <taxon>Mesorhizobium</taxon>
    </lineage>
</organism>
<reference key="1">
    <citation type="journal article" date="2000" name="DNA Res.">
        <title>Complete genome structure of the nitrogen-fixing symbiotic bacterium Mesorhizobium loti.</title>
        <authorList>
            <person name="Kaneko T."/>
            <person name="Nakamura Y."/>
            <person name="Sato S."/>
            <person name="Asamizu E."/>
            <person name="Kato T."/>
            <person name="Sasamoto S."/>
            <person name="Watanabe A."/>
            <person name="Idesawa K."/>
            <person name="Ishikawa A."/>
            <person name="Kawashima K."/>
            <person name="Kimura T."/>
            <person name="Kishida Y."/>
            <person name="Kiyokawa C."/>
            <person name="Kohara M."/>
            <person name="Matsumoto M."/>
            <person name="Matsuno A."/>
            <person name="Mochizuki Y."/>
            <person name="Nakayama S."/>
            <person name="Nakazaki N."/>
            <person name="Shimpo S."/>
            <person name="Sugimoto M."/>
            <person name="Takeuchi C."/>
            <person name="Yamada M."/>
            <person name="Tabata S."/>
        </authorList>
    </citation>
    <scope>NUCLEOTIDE SEQUENCE [LARGE SCALE GENOMIC DNA]</scope>
    <source>
        <strain>LMG 29417 / CECT 9101 / MAFF 303099</strain>
    </source>
</reference>
<sequence>MAKSKFRPLHDRVVVRRVESESKTAGGIIIPDTAKEKPQEGEIIAVGSGARDESGKLVPLDVKAGDRILFGKWSGTEVKLNGEDLLIMKESDIMGIIG</sequence>
<accession>Q983S3</accession>